<gene>
    <name evidence="1" type="primary">coq7</name>
    <name type="ordered locus">XOO3930</name>
</gene>
<comment type="function">
    <text evidence="1">Catalyzes the hydroxylation of 2-nonaprenyl-3-methyl-6-methoxy-1,4-benzoquinol during ubiquinone biosynthesis.</text>
</comment>
<comment type="catalytic activity">
    <reaction evidence="1">
        <text>a 5-methoxy-2-methyl-3-(all-trans-polyprenyl)benzene-1,4-diol + AH2 + O2 = a 3-demethylubiquinol + A + H2O</text>
        <dbReference type="Rhea" id="RHEA:50908"/>
        <dbReference type="Rhea" id="RHEA-COMP:10859"/>
        <dbReference type="Rhea" id="RHEA-COMP:10914"/>
        <dbReference type="ChEBI" id="CHEBI:13193"/>
        <dbReference type="ChEBI" id="CHEBI:15377"/>
        <dbReference type="ChEBI" id="CHEBI:15379"/>
        <dbReference type="ChEBI" id="CHEBI:17499"/>
        <dbReference type="ChEBI" id="CHEBI:84167"/>
        <dbReference type="ChEBI" id="CHEBI:84422"/>
        <dbReference type="EC" id="1.14.99.60"/>
    </reaction>
</comment>
<comment type="cofactor">
    <cofactor evidence="1">
        <name>Fe cation</name>
        <dbReference type="ChEBI" id="CHEBI:24875"/>
    </cofactor>
    <text evidence="1">Binds 2 iron ions per subunit.</text>
</comment>
<comment type="pathway">
    <text evidence="1">Cofactor biosynthesis; ubiquinone biosynthesis.</text>
</comment>
<comment type="subcellular location">
    <subcellularLocation>
        <location evidence="1">Cell membrane</location>
        <topology evidence="1">Peripheral membrane protein</topology>
    </subcellularLocation>
</comment>
<comment type="similarity">
    <text evidence="1">Belongs to the COQ7 family.</text>
</comment>
<reference key="1">
    <citation type="journal article" date="2005" name="Jpn. Agric. Res. Q.">
        <title>Genome sequence of Xanthomonas oryzae pv. oryzae suggests contribution of large numbers of effector genes and insertion sequences to its race diversity.</title>
        <authorList>
            <person name="Ochiai H."/>
            <person name="Inoue Y."/>
            <person name="Takeya M."/>
            <person name="Sasaki A."/>
            <person name="Kaku H."/>
        </authorList>
    </citation>
    <scope>NUCLEOTIDE SEQUENCE [LARGE SCALE GENOMIC DNA]</scope>
    <source>
        <strain>MAFF 311018</strain>
    </source>
</reference>
<dbReference type="EC" id="1.14.99.60" evidence="1"/>
<dbReference type="EMBL" id="AP008229">
    <property type="protein sequence ID" value="BAE70685.1"/>
    <property type="molecule type" value="Genomic_DNA"/>
</dbReference>
<dbReference type="RefSeq" id="WP_011260492.1">
    <property type="nucleotide sequence ID" value="NC_007705.1"/>
</dbReference>
<dbReference type="SMR" id="Q2NYE2"/>
<dbReference type="KEGG" id="xom:XOO3930"/>
<dbReference type="HOGENOM" id="CLU_088601_0_0_6"/>
<dbReference type="UniPathway" id="UPA00232"/>
<dbReference type="GO" id="GO:0005886">
    <property type="term" value="C:plasma membrane"/>
    <property type="evidence" value="ECO:0007669"/>
    <property type="project" value="UniProtKB-SubCell"/>
</dbReference>
<dbReference type="GO" id="GO:0008682">
    <property type="term" value="F:3-demethoxyubiquinol 3-hydroxylase activity"/>
    <property type="evidence" value="ECO:0007669"/>
    <property type="project" value="UniProtKB-EC"/>
</dbReference>
<dbReference type="GO" id="GO:0046872">
    <property type="term" value="F:metal ion binding"/>
    <property type="evidence" value="ECO:0007669"/>
    <property type="project" value="UniProtKB-KW"/>
</dbReference>
<dbReference type="GO" id="GO:0006744">
    <property type="term" value="P:ubiquinone biosynthetic process"/>
    <property type="evidence" value="ECO:0007669"/>
    <property type="project" value="UniProtKB-UniRule"/>
</dbReference>
<dbReference type="CDD" id="cd01042">
    <property type="entry name" value="DMQH"/>
    <property type="match status" value="1"/>
</dbReference>
<dbReference type="FunFam" id="1.20.1260.10:FF:000013">
    <property type="entry name" value="2-nonaprenyl-3-methyl-6-methoxy-1,4-benzoquinol hydroxylase"/>
    <property type="match status" value="1"/>
</dbReference>
<dbReference type="Gene3D" id="1.20.1260.10">
    <property type="match status" value="1"/>
</dbReference>
<dbReference type="HAMAP" id="MF_01658">
    <property type="entry name" value="COQ7"/>
    <property type="match status" value="1"/>
</dbReference>
<dbReference type="InterPro" id="IPR047809">
    <property type="entry name" value="COQ7_proteobact"/>
</dbReference>
<dbReference type="InterPro" id="IPR012347">
    <property type="entry name" value="Ferritin-like"/>
</dbReference>
<dbReference type="InterPro" id="IPR009078">
    <property type="entry name" value="Ferritin-like_SF"/>
</dbReference>
<dbReference type="InterPro" id="IPR011566">
    <property type="entry name" value="Ubq_synth_Coq7"/>
</dbReference>
<dbReference type="NCBIfam" id="NF033656">
    <property type="entry name" value="DMQ_monoox_COQ7"/>
    <property type="match status" value="1"/>
</dbReference>
<dbReference type="PANTHER" id="PTHR11237:SF4">
    <property type="entry name" value="5-DEMETHOXYUBIQUINONE HYDROXYLASE, MITOCHONDRIAL"/>
    <property type="match status" value="1"/>
</dbReference>
<dbReference type="PANTHER" id="PTHR11237">
    <property type="entry name" value="COENZYME Q10 BIOSYNTHESIS PROTEIN 7"/>
    <property type="match status" value="1"/>
</dbReference>
<dbReference type="Pfam" id="PF03232">
    <property type="entry name" value="COQ7"/>
    <property type="match status" value="1"/>
</dbReference>
<dbReference type="SUPFAM" id="SSF47240">
    <property type="entry name" value="Ferritin-like"/>
    <property type="match status" value="1"/>
</dbReference>
<feature type="chain" id="PRO_0000338738" description="3-demethoxyubiquinol 3-hydroxylase">
    <location>
        <begin position="1"/>
        <end position="217"/>
    </location>
</feature>
<feature type="binding site" evidence="1">
    <location>
        <position position="66"/>
    </location>
    <ligand>
        <name>Fe cation</name>
        <dbReference type="ChEBI" id="CHEBI:24875"/>
        <label>1</label>
    </ligand>
</feature>
<feature type="binding site" evidence="1">
    <location>
        <position position="96"/>
    </location>
    <ligand>
        <name>Fe cation</name>
        <dbReference type="ChEBI" id="CHEBI:24875"/>
        <label>1</label>
    </ligand>
</feature>
<feature type="binding site" evidence="1">
    <location>
        <position position="96"/>
    </location>
    <ligand>
        <name>Fe cation</name>
        <dbReference type="ChEBI" id="CHEBI:24875"/>
        <label>2</label>
    </ligand>
</feature>
<feature type="binding site" evidence="1">
    <location>
        <position position="99"/>
    </location>
    <ligand>
        <name>Fe cation</name>
        <dbReference type="ChEBI" id="CHEBI:24875"/>
        <label>1</label>
    </ligand>
</feature>
<feature type="binding site" evidence="1">
    <location>
        <position position="148"/>
    </location>
    <ligand>
        <name>Fe cation</name>
        <dbReference type="ChEBI" id="CHEBI:24875"/>
        <label>2</label>
    </ligand>
</feature>
<feature type="binding site" evidence="1">
    <location>
        <position position="180"/>
    </location>
    <ligand>
        <name>Fe cation</name>
        <dbReference type="ChEBI" id="CHEBI:24875"/>
        <label>1</label>
    </ligand>
</feature>
<feature type="binding site" evidence="1">
    <location>
        <position position="180"/>
    </location>
    <ligand>
        <name>Fe cation</name>
        <dbReference type="ChEBI" id="CHEBI:24875"/>
        <label>2</label>
    </ligand>
</feature>
<feature type="binding site" evidence="1">
    <location>
        <position position="183"/>
    </location>
    <ligand>
        <name>Fe cation</name>
        <dbReference type="ChEBI" id="CHEBI:24875"/>
        <label>2</label>
    </ligand>
</feature>
<accession>Q2NYE2</accession>
<evidence type="ECO:0000255" key="1">
    <source>
        <dbReference type="HAMAP-Rule" id="MF_01658"/>
    </source>
</evidence>
<proteinExistence type="inferred from homology"/>
<name>COQ7_XANOM</name>
<keyword id="KW-1003">Cell membrane</keyword>
<keyword id="KW-0408">Iron</keyword>
<keyword id="KW-0472">Membrane</keyword>
<keyword id="KW-0479">Metal-binding</keyword>
<keyword id="KW-0503">Monooxygenase</keyword>
<keyword id="KW-0560">Oxidoreductase</keyword>
<keyword id="KW-0831">Ubiquinone biosynthesis</keyword>
<protein>
    <recommendedName>
        <fullName evidence="1">3-demethoxyubiquinol 3-hydroxylase</fullName>
        <shortName evidence="1">DMQ hydroxylase</shortName>
        <ecNumber evidence="1">1.14.99.60</ecNumber>
    </recommendedName>
    <alternativeName>
        <fullName evidence="1">2-nonaprenyl-3-methyl-6-methoxy-1,4-benzoquinol hydroxylase</fullName>
    </alternativeName>
</protein>
<sequence>MTQTSPSRLHSPLDRLLVEAQRALDTVFGNPPAERPNPAADTPDIALDPEQRRHAAGLMRINHVGEVCAQGLYFGQAAVARDAHTQHHLLEAAQEETDHLAWCADRLHELDSRPSLLNPLWYAGSYALGALAGLRGDDWSLGFVVETERQVEAHLDEHLETLPDIDQRSRAILRVMKIDEARHADQAEQAGARQLPAPIPGAMALASKLMKTVAYRL</sequence>
<organism>
    <name type="scientific">Xanthomonas oryzae pv. oryzae (strain MAFF 311018)</name>
    <dbReference type="NCBI Taxonomy" id="342109"/>
    <lineage>
        <taxon>Bacteria</taxon>
        <taxon>Pseudomonadati</taxon>
        <taxon>Pseudomonadota</taxon>
        <taxon>Gammaproteobacteria</taxon>
        <taxon>Lysobacterales</taxon>
        <taxon>Lysobacteraceae</taxon>
        <taxon>Xanthomonas</taxon>
    </lineage>
</organism>